<evidence type="ECO:0000255" key="1">
    <source>
        <dbReference type="HAMAP-Rule" id="MF_01592"/>
    </source>
</evidence>
<name>NUDL_ECOHS</name>
<gene>
    <name evidence="1" type="primary">nudL</name>
    <name type="ordered locus">EcHS_A1903</name>
</gene>
<sequence length="192" mass="21464">MEYRSLTLDDFLSRFQLLRPQINRETLNHRQAAVLIPIVRRPQPGLLLTQRSIHLRKHAGQVAFPGGAVDDTDASVIAAALREAEEEVAIPPSAVEVIGVLPPVDSVTGYQVTPVVGIIPPDLPYRASEDEVSAVFEMPLAQALHLGRYHPLDIYRRGDSHRVWLSWYEQYFVWGMTAGIIRELALQIGVKP</sequence>
<keyword id="KW-0378">Hydrolase</keyword>
<keyword id="KW-0460">Magnesium</keyword>
<keyword id="KW-0464">Manganese</keyword>
<keyword id="KW-0479">Metal-binding</keyword>
<dbReference type="EC" id="3.6.1.-" evidence="1"/>
<dbReference type="EMBL" id="CP000802">
    <property type="protein sequence ID" value="ABV06214.1"/>
    <property type="molecule type" value="Genomic_DNA"/>
</dbReference>
<dbReference type="RefSeq" id="WP_000456725.1">
    <property type="nucleotide sequence ID" value="NC_009800.1"/>
</dbReference>
<dbReference type="SMR" id="A8A110"/>
<dbReference type="KEGG" id="ecx:EcHS_A1903"/>
<dbReference type="HOGENOM" id="CLU_040940_5_2_6"/>
<dbReference type="GO" id="GO:0010945">
    <property type="term" value="F:coenzyme A diphosphatase activity"/>
    <property type="evidence" value="ECO:0007669"/>
    <property type="project" value="InterPro"/>
</dbReference>
<dbReference type="GO" id="GO:0000287">
    <property type="term" value="F:magnesium ion binding"/>
    <property type="evidence" value="ECO:0007669"/>
    <property type="project" value="UniProtKB-UniRule"/>
</dbReference>
<dbReference type="GO" id="GO:0030145">
    <property type="term" value="F:manganese ion binding"/>
    <property type="evidence" value="ECO:0007669"/>
    <property type="project" value="UniProtKB-UniRule"/>
</dbReference>
<dbReference type="GO" id="GO:0009132">
    <property type="term" value="P:nucleoside diphosphate metabolic process"/>
    <property type="evidence" value="ECO:0007669"/>
    <property type="project" value="InterPro"/>
</dbReference>
<dbReference type="CDD" id="cd03426">
    <property type="entry name" value="NUDIX_CoAse_Nudt7"/>
    <property type="match status" value="1"/>
</dbReference>
<dbReference type="FunFam" id="3.90.79.10:FF:000013">
    <property type="entry name" value="Uncharacterized Nudix hydrolase NudL"/>
    <property type="match status" value="1"/>
</dbReference>
<dbReference type="Gene3D" id="3.90.79.10">
    <property type="entry name" value="Nucleoside Triphosphate Pyrophosphohydrolase"/>
    <property type="match status" value="1"/>
</dbReference>
<dbReference type="HAMAP" id="MF_01592">
    <property type="entry name" value="Nudix_NudL"/>
    <property type="match status" value="1"/>
</dbReference>
<dbReference type="InterPro" id="IPR045121">
    <property type="entry name" value="CoAse"/>
</dbReference>
<dbReference type="InterPro" id="IPR015797">
    <property type="entry name" value="NUDIX_hydrolase-like_dom_sf"/>
</dbReference>
<dbReference type="InterPro" id="IPR000086">
    <property type="entry name" value="NUDIX_hydrolase_dom"/>
</dbReference>
<dbReference type="InterPro" id="IPR000059">
    <property type="entry name" value="NUDIX_hydrolase_NudL_CS"/>
</dbReference>
<dbReference type="InterPro" id="IPR023735">
    <property type="entry name" value="Nudix_NudL"/>
</dbReference>
<dbReference type="NCBIfam" id="NF007980">
    <property type="entry name" value="PRK10707.1"/>
    <property type="match status" value="1"/>
</dbReference>
<dbReference type="PANTHER" id="PTHR12992:SF11">
    <property type="entry name" value="MITOCHONDRIAL COENZYME A DIPHOSPHATASE NUDT8"/>
    <property type="match status" value="1"/>
</dbReference>
<dbReference type="PANTHER" id="PTHR12992">
    <property type="entry name" value="NUDIX HYDROLASE"/>
    <property type="match status" value="1"/>
</dbReference>
<dbReference type="Pfam" id="PF00293">
    <property type="entry name" value="NUDIX"/>
    <property type="match status" value="1"/>
</dbReference>
<dbReference type="SUPFAM" id="SSF55811">
    <property type="entry name" value="Nudix"/>
    <property type="match status" value="1"/>
</dbReference>
<dbReference type="PROSITE" id="PS51462">
    <property type="entry name" value="NUDIX"/>
    <property type="match status" value="1"/>
</dbReference>
<dbReference type="PROSITE" id="PS01293">
    <property type="entry name" value="NUDIX_COA"/>
    <property type="match status" value="1"/>
</dbReference>
<protein>
    <recommendedName>
        <fullName evidence="1">Uncharacterized Nudix hydrolase NudL</fullName>
        <ecNumber evidence="1">3.6.1.-</ecNumber>
    </recommendedName>
</protein>
<reference key="1">
    <citation type="journal article" date="2008" name="J. Bacteriol.">
        <title>The pangenome structure of Escherichia coli: comparative genomic analysis of E. coli commensal and pathogenic isolates.</title>
        <authorList>
            <person name="Rasko D.A."/>
            <person name="Rosovitz M.J."/>
            <person name="Myers G.S.A."/>
            <person name="Mongodin E.F."/>
            <person name="Fricke W.F."/>
            <person name="Gajer P."/>
            <person name="Crabtree J."/>
            <person name="Sebaihia M."/>
            <person name="Thomson N.R."/>
            <person name="Chaudhuri R."/>
            <person name="Henderson I.R."/>
            <person name="Sperandio V."/>
            <person name="Ravel J."/>
        </authorList>
    </citation>
    <scope>NUCLEOTIDE SEQUENCE [LARGE SCALE GENOMIC DNA]</scope>
    <source>
        <strain>HS</strain>
    </source>
</reference>
<feature type="chain" id="PRO_0000315578" description="Uncharacterized Nudix hydrolase NudL">
    <location>
        <begin position="1"/>
        <end position="192"/>
    </location>
</feature>
<feature type="domain" description="Nudix hydrolase" evidence="1">
    <location>
        <begin position="29"/>
        <end position="160"/>
    </location>
</feature>
<feature type="short sequence motif" description="Nudix box">
    <location>
        <begin position="67"/>
        <end position="89"/>
    </location>
</feature>
<feature type="binding site" evidence="1">
    <location>
        <position position="83"/>
    </location>
    <ligand>
        <name>Mg(2+)</name>
        <dbReference type="ChEBI" id="CHEBI:18420"/>
    </ligand>
</feature>
<feature type="binding site" evidence="1">
    <location>
        <position position="87"/>
    </location>
    <ligand>
        <name>Mg(2+)</name>
        <dbReference type="ChEBI" id="CHEBI:18420"/>
    </ligand>
</feature>
<comment type="function">
    <text evidence="1">Probably mediates the hydrolysis of some nucleoside diphosphate derivatives.</text>
</comment>
<comment type="cofactor">
    <cofactor evidence="1">
        <name>Mn(2+)</name>
        <dbReference type="ChEBI" id="CHEBI:29035"/>
    </cofactor>
    <cofactor evidence="1">
        <name>Mg(2+)</name>
        <dbReference type="ChEBI" id="CHEBI:18420"/>
    </cofactor>
</comment>
<comment type="similarity">
    <text evidence="1">Belongs to the Nudix hydrolase family. PCD1 subfamily.</text>
</comment>
<proteinExistence type="inferred from homology"/>
<accession>A8A110</accession>
<organism>
    <name type="scientific">Escherichia coli O9:H4 (strain HS)</name>
    <dbReference type="NCBI Taxonomy" id="331112"/>
    <lineage>
        <taxon>Bacteria</taxon>
        <taxon>Pseudomonadati</taxon>
        <taxon>Pseudomonadota</taxon>
        <taxon>Gammaproteobacteria</taxon>
        <taxon>Enterobacterales</taxon>
        <taxon>Enterobacteriaceae</taxon>
        <taxon>Escherichia</taxon>
    </lineage>
</organism>